<feature type="chain" id="PRO_0000216271" description="Ion-translocating oxidoreductase complex subunit B">
    <location>
        <begin position="1"/>
        <end position="192"/>
    </location>
</feature>
<feature type="domain" description="4Fe-4S" evidence="1">
    <location>
        <begin position="32"/>
        <end position="91"/>
    </location>
</feature>
<feature type="domain" description="4Fe-4S ferredoxin-type 1" evidence="1">
    <location>
        <begin position="108"/>
        <end position="137"/>
    </location>
</feature>
<feature type="domain" description="4Fe-4S ferredoxin-type 2" evidence="1">
    <location>
        <begin position="138"/>
        <end position="167"/>
    </location>
</feature>
<feature type="region of interest" description="Hydrophobic" evidence="1">
    <location>
        <begin position="1"/>
        <end position="26"/>
    </location>
</feature>
<feature type="binding site" evidence="1">
    <location>
        <position position="49"/>
    </location>
    <ligand>
        <name>[4Fe-4S] cluster</name>
        <dbReference type="ChEBI" id="CHEBI:49883"/>
        <label>1</label>
    </ligand>
</feature>
<feature type="binding site" evidence="1">
    <location>
        <position position="52"/>
    </location>
    <ligand>
        <name>[4Fe-4S] cluster</name>
        <dbReference type="ChEBI" id="CHEBI:49883"/>
        <label>1</label>
    </ligand>
</feature>
<feature type="binding site" evidence="1">
    <location>
        <position position="57"/>
    </location>
    <ligand>
        <name>[4Fe-4S] cluster</name>
        <dbReference type="ChEBI" id="CHEBI:49883"/>
        <label>1</label>
    </ligand>
</feature>
<feature type="binding site" evidence="1">
    <location>
        <position position="74"/>
    </location>
    <ligand>
        <name>[4Fe-4S] cluster</name>
        <dbReference type="ChEBI" id="CHEBI:49883"/>
        <label>1</label>
    </ligand>
</feature>
<feature type="binding site" evidence="1">
    <location>
        <position position="117"/>
    </location>
    <ligand>
        <name>[4Fe-4S] cluster</name>
        <dbReference type="ChEBI" id="CHEBI:49883"/>
        <label>2</label>
    </ligand>
</feature>
<feature type="binding site" evidence="1">
    <location>
        <position position="120"/>
    </location>
    <ligand>
        <name>[4Fe-4S] cluster</name>
        <dbReference type="ChEBI" id="CHEBI:49883"/>
        <label>2</label>
    </ligand>
</feature>
<feature type="binding site" evidence="1">
    <location>
        <position position="123"/>
    </location>
    <ligand>
        <name>[4Fe-4S] cluster</name>
        <dbReference type="ChEBI" id="CHEBI:49883"/>
        <label>2</label>
    </ligand>
</feature>
<feature type="binding site" evidence="1">
    <location>
        <position position="127"/>
    </location>
    <ligand>
        <name>[4Fe-4S] cluster</name>
        <dbReference type="ChEBI" id="CHEBI:49883"/>
        <label>3</label>
    </ligand>
</feature>
<feature type="binding site" evidence="1">
    <location>
        <position position="147"/>
    </location>
    <ligand>
        <name>[4Fe-4S] cluster</name>
        <dbReference type="ChEBI" id="CHEBI:49883"/>
        <label>3</label>
    </ligand>
</feature>
<feature type="binding site" evidence="1">
    <location>
        <position position="150"/>
    </location>
    <ligand>
        <name>[4Fe-4S] cluster</name>
        <dbReference type="ChEBI" id="CHEBI:49883"/>
        <label>3</label>
    </ligand>
</feature>
<feature type="binding site" evidence="1">
    <location>
        <position position="153"/>
    </location>
    <ligand>
        <name>[4Fe-4S] cluster</name>
        <dbReference type="ChEBI" id="CHEBI:49883"/>
        <label>3</label>
    </ligand>
</feature>
<feature type="binding site" evidence="1">
    <location>
        <position position="157"/>
    </location>
    <ligand>
        <name>[4Fe-4S] cluster</name>
        <dbReference type="ChEBI" id="CHEBI:49883"/>
        <label>2</label>
    </ligand>
</feature>
<name>RSXB_ECOLI</name>
<keyword id="KW-0004">4Fe-4S</keyword>
<keyword id="KW-0997">Cell inner membrane</keyword>
<keyword id="KW-1003">Cell membrane</keyword>
<keyword id="KW-0249">Electron transport</keyword>
<keyword id="KW-0408">Iron</keyword>
<keyword id="KW-0411">Iron-sulfur</keyword>
<keyword id="KW-0472">Membrane</keyword>
<keyword id="KW-0479">Metal-binding</keyword>
<keyword id="KW-1185">Reference proteome</keyword>
<keyword id="KW-0677">Repeat</keyword>
<keyword id="KW-1278">Translocase</keyword>
<keyword id="KW-0813">Transport</keyword>
<dbReference type="EC" id="7.-.-.-" evidence="1 4"/>
<dbReference type="EMBL" id="U00096">
    <property type="protein sequence ID" value="AAC74700.1"/>
    <property type="molecule type" value="Genomic_DNA"/>
</dbReference>
<dbReference type="EMBL" id="AP009048">
    <property type="protein sequence ID" value="BAA15383.1"/>
    <property type="molecule type" value="Genomic_DNA"/>
</dbReference>
<dbReference type="PIR" id="F64919">
    <property type="entry name" value="F64919"/>
</dbReference>
<dbReference type="RefSeq" id="NP_416145.1">
    <property type="nucleotide sequence ID" value="NC_000913.3"/>
</dbReference>
<dbReference type="RefSeq" id="WP_000991805.1">
    <property type="nucleotide sequence ID" value="NZ_SSZK01000001.1"/>
</dbReference>
<dbReference type="BioGRID" id="4261721">
    <property type="interactions" value="48"/>
</dbReference>
<dbReference type="FunCoup" id="P77223">
    <property type="interactions" value="91"/>
</dbReference>
<dbReference type="IntAct" id="P77223">
    <property type="interactions" value="1"/>
</dbReference>
<dbReference type="STRING" id="511145.b1628"/>
<dbReference type="TCDB" id="3.D.6.1.4">
    <property type="family name" value="the ion (h(+) or na(+))-translocating nadh:ferredoxin oxidoreductase (nfo or rnf) family"/>
</dbReference>
<dbReference type="jPOST" id="P77223"/>
<dbReference type="PaxDb" id="511145-b1628"/>
<dbReference type="EnsemblBacteria" id="AAC74700">
    <property type="protein sequence ID" value="AAC74700"/>
    <property type="gene ID" value="b1628"/>
</dbReference>
<dbReference type="GeneID" id="946146"/>
<dbReference type="KEGG" id="ecj:JW1620"/>
<dbReference type="KEGG" id="eco:b1628"/>
<dbReference type="KEGG" id="ecoc:C3026_09355"/>
<dbReference type="PATRIC" id="fig|1411691.4.peg.633"/>
<dbReference type="EchoBASE" id="EB3693"/>
<dbReference type="eggNOG" id="COG2878">
    <property type="taxonomic scope" value="Bacteria"/>
</dbReference>
<dbReference type="HOGENOM" id="CLU_063448_2_0_6"/>
<dbReference type="InParanoid" id="P77223"/>
<dbReference type="OMA" id="ITKCVPG"/>
<dbReference type="OrthoDB" id="9789936at2"/>
<dbReference type="PhylomeDB" id="P77223"/>
<dbReference type="BioCyc" id="EcoCyc:G6872-MONOMER"/>
<dbReference type="PRO" id="PR:P77223"/>
<dbReference type="Proteomes" id="UP000000625">
    <property type="component" value="Chromosome"/>
</dbReference>
<dbReference type="GO" id="GO:1990204">
    <property type="term" value="C:oxidoreductase complex"/>
    <property type="evidence" value="ECO:0000314"/>
    <property type="project" value="EcoCyc"/>
</dbReference>
<dbReference type="GO" id="GO:0098797">
    <property type="term" value="C:plasma membrane protein complex"/>
    <property type="evidence" value="ECO:0000314"/>
    <property type="project" value="EcoCyc"/>
</dbReference>
<dbReference type="GO" id="GO:0051539">
    <property type="term" value="F:4 iron, 4 sulfur cluster binding"/>
    <property type="evidence" value="ECO:0007669"/>
    <property type="project" value="UniProtKB-UniRule"/>
</dbReference>
<dbReference type="GO" id="GO:0009055">
    <property type="term" value="F:electron transfer activity"/>
    <property type="evidence" value="ECO:0007669"/>
    <property type="project" value="InterPro"/>
</dbReference>
<dbReference type="GO" id="GO:0046872">
    <property type="term" value="F:metal ion binding"/>
    <property type="evidence" value="ECO:0007669"/>
    <property type="project" value="UniProtKB-KW"/>
</dbReference>
<dbReference type="GO" id="GO:0022900">
    <property type="term" value="P:electron transport chain"/>
    <property type="evidence" value="ECO:0007669"/>
    <property type="project" value="UniProtKB-UniRule"/>
</dbReference>
<dbReference type="FunFam" id="1.10.15.40:FF:000001">
    <property type="entry name" value="Ion-translocating oxidoreductase complex subunit B"/>
    <property type="match status" value="1"/>
</dbReference>
<dbReference type="Gene3D" id="3.30.70.20">
    <property type="match status" value="1"/>
</dbReference>
<dbReference type="Gene3D" id="1.10.15.40">
    <property type="entry name" value="Electron transport complex subunit B, putative Fe-S cluster"/>
    <property type="match status" value="1"/>
</dbReference>
<dbReference type="HAMAP" id="MF_00463">
    <property type="entry name" value="RsxB_RnfB"/>
    <property type="match status" value="1"/>
</dbReference>
<dbReference type="InterPro" id="IPR007202">
    <property type="entry name" value="4Fe-4S_dom"/>
</dbReference>
<dbReference type="InterPro" id="IPR017896">
    <property type="entry name" value="4Fe4S_Fe-S-bd"/>
</dbReference>
<dbReference type="InterPro" id="IPR017900">
    <property type="entry name" value="4Fe4S_Fe_S_CS"/>
</dbReference>
<dbReference type="InterPro" id="IPR050395">
    <property type="entry name" value="4Fe4S_Ferredoxin_RnfB"/>
</dbReference>
<dbReference type="InterPro" id="IPR010207">
    <property type="entry name" value="Elect_transpt_cplx_RnfB/RsxB"/>
</dbReference>
<dbReference type="InterPro" id="IPR016463">
    <property type="entry name" value="RnfB/RsxB_Proteobac"/>
</dbReference>
<dbReference type="NCBIfam" id="NF003475">
    <property type="entry name" value="PRK05113.1"/>
    <property type="match status" value="1"/>
</dbReference>
<dbReference type="NCBIfam" id="TIGR01944">
    <property type="entry name" value="rnfB"/>
    <property type="match status" value="1"/>
</dbReference>
<dbReference type="PANTHER" id="PTHR43560">
    <property type="entry name" value="ION-TRANSLOCATING OXIDOREDUCTASE COMPLEX SUBUNIT B"/>
    <property type="match status" value="1"/>
</dbReference>
<dbReference type="PANTHER" id="PTHR43560:SF1">
    <property type="entry name" value="ION-TRANSLOCATING OXIDOREDUCTASE COMPLEX SUBUNIT B"/>
    <property type="match status" value="1"/>
</dbReference>
<dbReference type="Pfam" id="PF14697">
    <property type="entry name" value="Fer4_21"/>
    <property type="match status" value="1"/>
</dbReference>
<dbReference type="Pfam" id="PF04060">
    <property type="entry name" value="FeS"/>
    <property type="match status" value="1"/>
</dbReference>
<dbReference type="PIRSF" id="PIRSF005784">
    <property type="entry name" value="Elect_transpt_RnfB"/>
    <property type="match status" value="1"/>
</dbReference>
<dbReference type="SUPFAM" id="SSF54862">
    <property type="entry name" value="4Fe-4S ferredoxins"/>
    <property type="match status" value="1"/>
</dbReference>
<dbReference type="PROSITE" id="PS51656">
    <property type="entry name" value="4FE4S"/>
    <property type="match status" value="1"/>
</dbReference>
<dbReference type="PROSITE" id="PS00198">
    <property type="entry name" value="4FE4S_FER_1"/>
    <property type="match status" value="2"/>
</dbReference>
<dbReference type="PROSITE" id="PS51379">
    <property type="entry name" value="4FE4S_FER_2"/>
    <property type="match status" value="2"/>
</dbReference>
<gene>
    <name evidence="1 3" type="primary">rsxB</name>
    <name type="synonym">rnfB</name>
    <name type="synonym">ydgM</name>
    <name type="ordered locus">b1628</name>
    <name type="ordered locus">JW1620</name>
</gene>
<evidence type="ECO:0000255" key="1">
    <source>
        <dbReference type="HAMAP-Rule" id="MF_00463"/>
    </source>
</evidence>
<evidence type="ECO:0000269" key="2">
    <source>
    </source>
</evidence>
<evidence type="ECO:0000303" key="3">
    <source>
    </source>
</evidence>
<evidence type="ECO:0000305" key="4"/>
<evidence type="ECO:0000305" key="5">
    <source>
    </source>
</evidence>
<accession>P77223</accession>
<comment type="function">
    <text evidence="1 2">Part of a membrane-bound complex that couples electron transfer with translocation of ions across the membrane (By similarity). Required to maintain the reduced state of SoxR. Probably transfers electron from NAD(P)H to SoxR (PubMed:12773378).</text>
</comment>
<comment type="cofactor">
    <cofactor evidence="1">
        <name>[4Fe-4S] cluster</name>
        <dbReference type="ChEBI" id="CHEBI:49883"/>
    </cofactor>
    <text evidence="1">Binds 3 [4Fe-4S] clusters.</text>
</comment>
<comment type="subunit">
    <text evidence="1 5">The complex is composed of six subunits: RsxA, RsxB, RsxC, RsxD, RsxE and RsxG.</text>
</comment>
<comment type="subcellular location">
    <subcellularLocation>
        <location evidence="1">Cell inner membrane</location>
    </subcellularLocation>
</comment>
<comment type="similarity">
    <text evidence="1">Belongs to the 4Fe4S bacterial-type ferredoxin family. RnfB subfamily.</text>
</comment>
<organism>
    <name type="scientific">Escherichia coli (strain K12)</name>
    <dbReference type="NCBI Taxonomy" id="83333"/>
    <lineage>
        <taxon>Bacteria</taxon>
        <taxon>Pseudomonadati</taxon>
        <taxon>Pseudomonadota</taxon>
        <taxon>Gammaproteobacteria</taxon>
        <taxon>Enterobacterales</taxon>
        <taxon>Enterobacteriaceae</taxon>
        <taxon>Escherichia</taxon>
    </lineage>
</organism>
<protein>
    <recommendedName>
        <fullName evidence="1 4">Ion-translocating oxidoreductase complex subunit B</fullName>
        <ecNumber evidence="1 4">7.-.-.-</ecNumber>
    </recommendedName>
    <alternativeName>
        <fullName evidence="1 4">Rsx electron transport complex subunit B</fullName>
    </alternativeName>
</protein>
<proteinExistence type="evidence at protein level"/>
<reference key="1">
    <citation type="journal article" date="1996" name="DNA Res.">
        <title>A 570-kb DNA sequence of the Escherichia coli K-12 genome corresponding to the 28.0-40.1 min region on the linkage map.</title>
        <authorList>
            <person name="Aiba H."/>
            <person name="Baba T."/>
            <person name="Fujita K."/>
            <person name="Hayashi K."/>
            <person name="Inada T."/>
            <person name="Isono K."/>
            <person name="Itoh T."/>
            <person name="Kasai H."/>
            <person name="Kashimoto K."/>
            <person name="Kimura S."/>
            <person name="Kitakawa M."/>
            <person name="Kitagawa M."/>
            <person name="Makino K."/>
            <person name="Miki T."/>
            <person name="Mizobuchi K."/>
            <person name="Mori H."/>
            <person name="Mori T."/>
            <person name="Motomura K."/>
            <person name="Nakade S."/>
            <person name="Nakamura Y."/>
            <person name="Nashimoto H."/>
            <person name="Nishio Y."/>
            <person name="Oshima T."/>
            <person name="Saito N."/>
            <person name="Sampei G."/>
            <person name="Seki Y."/>
            <person name="Sivasundaram S."/>
            <person name="Tagami H."/>
            <person name="Takeda J."/>
            <person name="Takemoto K."/>
            <person name="Takeuchi Y."/>
            <person name="Wada C."/>
            <person name="Yamamoto Y."/>
            <person name="Horiuchi T."/>
        </authorList>
    </citation>
    <scope>NUCLEOTIDE SEQUENCE [LARGE SCALE GENOMIC DNA]</scope>
    <source>
        <strain>K12 / W3110 / ATCC 27325 / DSM 5911</strain>
    </source>
</reference>
<reference key="2">
    <citation type="journal article" date="1997" name="Science">
        <title>The complete genome sequence of Escherichia coli K-12.</title>
        <authorList>
            <person name="Blattner F.R."/>
            <person name="Plunkett G. III"/>
            <person name="Bloch C.A."/>
            <person name="Perna N.T."/>
            <person name="Burland V."/>
            <person name="Riley M."/>
            <person name="Collado-Vides J."/>
            <person name="Glasner J.D."/>
            <person name="Rode C.K."/>
            <person name="Mayhew G.F."/>
            <person name="Gregor J."/>
            <person name="Davis N.W."/>
            <person name="Kirkpatrick H.A."/>
            <person name="Goeden M.A."/>
            <person name="Rose D.J."/>
            <person name="Mau B."/>
            <person name="Shao Y."/>
        </authorList>
    </citation>
    <scope>NUCLEOTIDE SEQUENCE [LARGE SCALE GENOMIC DNA]</scope>
    <source>
        <strain>K12 / MG1655 / ATCC 47076</strain>
    </source>
</reference>
<reference key="3">
    <citation type="journal article" date="2006" name="Mol. Syst. Biol.">
        <title>Highly accurate genome sequences of Escherichia coli K-12 strains MG1655 and W3110.</title>
        <authorList>
            <person name="Hayashi K."/>
            <person name="Morooka N."/>
            <person name="Yamamoto Y."/>
            <person name="Fujita K."/>
            <person name="Isono K."/>
            <person name="Choi S."/>
            <person name="Ohtsubo E."/>
            <person name="Baba T."/>
            <person name="Wanner B.L."/>
            <person name="Mori H."/>
            <person name="Horiuchi T."/>
        </authorList>
    </citation>
    <scope>NUCLEOTIDE SEQUENCE [LARGE SCALE GENOMIC DNA]</scope>
    <source>
        <strain>K12 / W3110 / ATCC 27325 / DSM 5911</strain>
    </source>
</reference>
<reference key="4">
    <citation type="journal article" date="2003" name="EMBO J.">
        <title>A reducing system of the superoxide sensor SoxR in Escherichia coli.</title>
        <authorList>
            <person name="Koo M.S."/>
            <person name="Lee J.H."/>
            <person name="Rah S.Y."/>
            <person name="Yeo W.S."/>
            <person name="Lee J.W."/>
            <person name="Lee K.L."/>
            <person name="Koh Y.S."/>
            <person name="Kang S.O."/>
            <person name="Roe J.H."/>
        </authorList>
    </citation>
    <scope>FUNCTION</scope>
    <scope>SUBUNIT</scope>
    <scope>GENE NAME</scope>
</reference>
<sequence length="192" mass="20544">MNAIWIAVAAVSLLGLAFGAILGYASRRFAVEDDPVVEKIDEILPQSQCGQCGYPGCRPYAEAISCNGEKINRCAPGGEAVMLKIAELLNVEPQPLDGEAQEITPARMVAVIDENNCIGCTKCIQACPVDAIVGATRAMHTVMSDLCTGCNLCVDPCPTHCISLQPVAETPDSWKWDLNTIPVRIIPVEHHA</sequence>